<accession>Q56251</accession>
<feature type="chain" id="PRO_0000129930" description="Small ribosomal subunit protein uS19">
    <location>
        <begin position="1" status="less than"/>
        <end position="12"/>
    </location>
</feature>
<feature type="non-terminal residue">
    <location>
        <position position="1"/>
    </location>
</feature>
<gene>
    <name type="primary">rpsS</name>
    <name type="synonym">rps19</name>
</gene>
<reference key="1">
    <citation type="journal article" date="1994" name="J. Bacteriol.">
        <title>Phylogeny of mycoplasmalike organisms (phytoplasmas): a basis for their classification.</title>
        <authorList>
            <person name="Gundersen D.E."/>
            <person name="Lee I.M."/>
            <person name="Rehner S.A."/>
            <person name="Davis R.E."/>
            <person name="Kingsbury D.T."/>
        </authorList>
    </citation>
    <scope>NUCLEOTIDE SEQUENCE [GENOMIC DNA]</scope>
</reference>
<keyword id="KW-0687">Ribonucleoprotein</keyword>
<keyword id="KW-0689">Ribosomal protein</keyword>
<keyword id="KW-0694">RNA-binding</keyword>
<keyword id="KW-0699">rRNA-binding</keyword>
<sequence>GHNKKDKKMQKK</sequence>
<evidence type="ECO:0000250" key="1"/>
<evidence type="ECO:0000305" key="2"/>
<proteinExistence type="inferred from homology"/>
<organism>
    <name type="scientific">Tomato big bud phytoplasma</name>
    <dbReference type="NCBI Taxonomy" id="35770"/>
    <lineage>
        <taxon>Bacteria</taxon>
        <taxon>Bacillati</taxon>
        <taxon>Mycoplasmatota</taxon>
        <taxon>Mollicutes</taxon>
        <taxon>Acholeplasmatales</taxon>
        <taxon>Acholeplasmataceae</taxon>
        <taxon>Candidatus Phytoplasma</taxon>
        <taxon>16SrI (Aster yellows group)</taxon>
    </lineage>
</organism>
<protein>
    <recommendedName>
        <fullName evidence="2">Small ribosomal subunit protein uS19</fullName>
    </recommendedName>
    <alternativeName>
        <fullName>30S ribosomal protein S19</fullName>
    </alternativeName>
</protein>
<dbReference type="EMBL" id="L27004">
    <property type="protein sequence ID" value="AAA83952.1"/>
    <property type="molecule type" value="Genomic_DNA"/>
</dbReference>
<dbReference type="GO" id="GO:1990904">
    <property type="term" value="C:ribonucleoprotein complex"/>
    <property type="evidence" value="ECO:0007669"/>
    <property type="project" value="UniProtKB-KW"/>
</dbReference>
<dbReference type="GO" id="GO:0005840">
    <property type="term" value="C:ribosome"/>
    <property type="evidence" value="ECO:0007669"/>
    <property type="project" value="UniProtKB-KW"/>
</dbReference>
<dbReference type="GO" id="GO:0019843">
    <property type="term" value="F:rRNA binding"/>
    <property type="evidence" value="ECO:0007669"/>
    <property type="project" value="UniProtKB-KW"/>
</dbReference>
<comment type="function">
    <text evidence="1">Protein S19 forms a complex with S13 that binds strongly to the 16S ribosomal RNA.</text>
</comment>
<comment type="similarity">
    <text evidence="2">Belongs to the universal ribosomal protein uS19 family.</text>
</comment>
<name>RS19_TOBBP</name>